<protein>
    <recommendedName>
        <fullName evidence="1">Alginate lyase</fullName>
        <ecNumber evidence="1">4.2.2.3</ecNumber>
    </recommendedName>
    <alternativeName>
        <fullName evidence="1">Poly(beta-D-mannuronate) lyase</fullName>
    </alternativeName>
</protein>
<name>ALGL_AZOVD</name>
<reference key="1">
    <citation type="journal article" date="2009" name="J. Bacteriol.">
        <title>Genome sequence of Azotobacter vinelandii, an obligate aerobe specialized to support diverse anaerobic metabolic processes.</title>
        <authorList>
            <person name="Setubal J.C."/>
            <person name="Dos Santos P."/>
            <person name="Goldman B.S."/>
            <person name="Ertesvaag H."/>
            <person name="Espin G."/>
            <person name="Rubio L.M."/>
            <person name="Valla S."/>
            <person name="Almeida N.F."/>
            <person name="Balasubramanian D."/>
            <person name="Cromes L."/>
            <person name="Curatti L."/>
            <person name="Du Z."/>
            <person name="Godsy E."/>
            <person name="Goodner B."/>
            <person name="Hellner-Burris K."/>
            <person name="Hernandez J.A."/>
            <person name="Houmiel K."/>
            <person name="Imperial J."/>
            <person name="Kennedy C."/>
            <person name="Larson T.J."/>
            <person name="Latreille P."/>
            <person name="Ligon L.S."/>
            <person name="Lu J."/>
            <person name="Maerk M."/>
            <person name="Miller N.M."/>
            <person name="Norton S."/>
            <person name="O'Carroll I.P."/>
            <person name="Paulsen I."/>
            <person name="Raulfs E.C."/>
            <person name="Roemer R."/>
            <person name="Rosser J."/>
            <person name="Segura D."/>
            <person name="Slater S."/>
            <person name="Stricklin S.L."/>
            <person name="Studholme D.J."/>
            <person name="Sun J."/>
            <person name="Viana C.J."/>
            <person name="Wallin E."/>
            <person name="Wang B."/>
            <person name="Wheeler C."/>
            <person name="Zhu H."/>
            <person name="Dean D.R."/>
            <person name="Dixon R."/>
            <person name="Wood D."/>
        </authorList>
    </citation>
    <scope>NUCLEOTIDE SEQUENCE [LARGE SCALE GENOMIC DNA]</scope>
    <source>
        <strain>DJ / ATCC BAA-1303</strain>
    </source>
</reference>
<evidence type="ECO:0000255" key="1">
    <source>
        <dbReference type="HAMAP-Rule" id="MF_00557"/>
    </source>
</evidence>
<keyword id="KW-0456">Lyase</keyword>
<keyword id="KW-0574">Periplasm</keyword>
<keyword id="KW-0732">Signal</keyword>
<sequence length="374" mass="41404">MHKTRLALSCLLGSLLLSGAVHAAEALVPPKGYYAPVDIRKGEAPACPVVPEPFTGELVFRSKYEGSDAARSTLNEEAEKAFRTKTAPITQIERGVSRMVMRYMEKGRAGDLECTLAWLDAWAEDGALLTTEYNHTGKSMRKWALGSLAGAYLRLKFSSSQPLAAYPEQARRIESWFAKVGDQVIKDWSDLPLKRINNHSYWAAWAVMAAGVATNRRPLFDWAVEQFHIAAGQVDSNGFLPNELKRRQRALAYHNYSLPPLMMVAAFALANGVDLRGDNDGALGRLAGNVLAGVEKPEPFAERAGDEDQDMEDLETDAKFSWLEPYCALYSCSPALRERKAEMGPFKNFRLGGDVTRIFDPAEKSPRSTVGKRD</sequence>
<feature type="signal peptide" evidence="1">
    <location>
        <begin position="1"/>
        <end position="23"/>
    </location>
</feature>
<feature type="chain" id="PRO_1000212016" description="Alginate lyase">
    <location>
        <begin position="24"/>
        <end position="374"/>
    </location>
</feature>
<feature type="binding site" evidence="1">
    <location>
        <begin position="62"/>
        <end position="63"/>
    </location>
    <ligand>
        <name>substrate</name>
    </ligand>
</feature>
<feature type="binding site" evidence="1">
    <location>
        <begin position="135"/>
        <end position="136"/>
    </location>
    <ligand>
        <name>substrate</name>
    </ligand>
</feature>
<feature type="binding site" evidence="1">
    <location>
        <position position="253"/>
    </location>
    <ligand>
        <name>substrate</name>
    </ligand>
</feature>
<accession>C1DP89</accession>
<dbReference type="EC" id="4.2.2.3" evidence="1"/>
<dbReference type="EMBL" id="CP001157">
    <property type="protein sequence ID" value="ACO77321.1"/>
    <property type="molecule type" value="Genomic_DNA"/>
</dbReference>
<dbReference type="RefSeq" id="WP_012699742.1">
    <property type="nucleotide sequence ID" value="NC_012560.1"/>
</dbReference>
<dbReference type="SMR" id="C1DP89"/>
<dbReference type="STRING" id="322710.Avin_10900"/>
<dbReference type="CAZy" id="PL5">
    <property type="family name" value="Polysaccharide Lyase Family 5"/>
</dbReference>
<dbReference type="EnsemblBacteria" id="ACO77321">
    <property type="protein sequence ID" value="ACO77321"/>
    <property type="gene ID" value="Avin_10900"/>
</dbReference>
<dbReference type="GeneID" id="88184430"/>
<dbReference type="KEGG" id="avn:Avin_10900"/>
<dbReference type="eggNOG" id="ENOG502ZAMJ">
    <property type="taxonomic scope" value="Bacteria"/>
</dbReference>
<dbReference type="HOGENOM" id="CLU_064286_0_0_6"/>
<dbReference type="OrthoDB" id="6972889at2"/>
<dbReference type="Proteomes" id="UP000002424">
    <property type="component" value="Chromosome"/>
</dbReference>
<dbReference type="GO" id="GO:0042597">
    <property type="term" value="C:periplasmic space"/>
    <property type="evidence" value="ECO:0007669"/>
    <property type="project" value="UniProtKB-SubCell"/>
</dbReference>
<dbReference type="GO" id="GO:0045135">
    <property type="term" value="F:poly(beta-D-mannuronate) lyase activity"/>
    <property type="evidence" value="ECO:0007669"/>
    <property type="project" value="UniProtKB-UniRule"/>
</dbReference>
<dbReference type="GO" id="GO:0042122">
    <property type="term" value="P:alginic acid catabolic process"/>
    <property type="evidence" value="ECO:0007669"/>
    <property type="project" value="UniProtKB-UniRule"/>
</dbReference>
<dbReference type="CDD" id="cd00244">
    <property type="entry name" value="AlgLyase"/>
    <property type="match status" value="1"/>
</dbReference>
<dbReference type="Gene3D" id="1.50.10.100">
    <property type="entry name" value="Chondroitin AC/alginate lyase"/>
    <property type="match status" value="1"/>
</dbReference>
<dbReference type="HAMAP" id="MF_00557">
    <property type="entry name" value="Alginate_lyase"/>
    <property type="match status" value="1"/>
</dbReference>
<dbReference type="InterPro" id="IPR022859">
    <property type="entry name" value="Alginate_lyase"/>
</dbReference>
<dbReference type="InterPro" id="IPR008397">
    <property type="entry name" value="Alginate_lyase_dom"/>
</dbReference>
<dbReference type="InterPro" id="IPR008929">
    <property type="entry name" value="Chondroitin_lyas"/>
</dbReference>
<dbReference type="NCBIfam" id="NF001467">
    <property type="entry name" value="PRK00325.1-2"/>
    <property type="match status" value="1"/>
</dbReference>
<dbReference type="Pfam" id="PF05426">
    <property type="entry name" value="Alginate_lyase"/>
    <property type="match status" value="1"/>
</dbReference>
<dbReference type="SUPFAM" id="SSF48230">
    <property type="entry name" value="Chondroitin AC/alginate lyase"/>
    <property type="match status" value="1"/>
</dbReference>
<comment type="function">
    <text evidence="1">Catalyzes the depolymerization of alginate by cleaving the beta-1,4 glycosidic bond between two adjacent sugar residues via a beta-elimination mechanism. May serve to degrade mislocalized alginate that is trapped in the periplasmic space.</text>
</comment>
<comment type="catalytic activity">
    <reaction evidence="1">
        <text>Eliminative cleavage of alginate to give oligosaccharides with 4-deoxy-alpha-L-erythro-hex-4-enuronosyl groups at their non-reducing ends and beta-D-mannuronate at their reducing end.</text>
        <dbReference type="EC" id="4.2.2.3"/>
    </reaction>
</comment>
<comment type="subcellular location">
    <subcellularLocation>
        <location evidence="1">Periplasm</location>
    </subcellularLocation>
</comment>
<comment type="similarity">
    <text evidence="1">Belongs to the polysaccharide lyase 5 family.</text>
</comment>
<organism>
    <name type="scientific">Azotobacter vinelandii (strain DJ / ATCC BAA-1303)</name>
    <dbReference type="NCBI Taxonomy" id="322710"/>
    <lineage>
        <taxon>Bacteria</taxon>
        <taxon>Pseudomonadati</taxon>
        <taxon>Pseudomonadota</taxon>
        <taxon>Gammaproteobacteria</taxon>
        <taxon>Pseudomonadales</taxon>
        <taxon>Pseudomonadaceae</taxon>
        <taxon>Azotobacter</taxon>
    </lineage>
</organism>
<gene>
    <name evidence="1" type="primary">algL</name>
    <name type="ordered locus">Avin_10900</name>
</gene>
<proteinExistence type="inferred from homology"/>